<dbReference type="EC" id="7.1.1.-"/>
<dbReference type="EMBL" id="AP009371">
    <property type="protein sequence ID" value="BAF50247.1"/>
    <property type="molecule type" value="Genomic_DNA"/>
</dbReference>
<dbReference type="RefSeq" id="YP_001123422.1">
    <property type="nucleotide sequence ID" value="NC_009270.1"/>
</dbReference>
<dbReference type="SMR" id="A4QKP2"/>
<dbReference type="GeneID" id="4961701"/>
<dbReference type="GO" id="GO:0009535">
    <property type="term" value="C:chloroplast thylakoid membrane"/>
    <property type="evidence" value="ECO:0007669"/>
    <property type="project" value="UniProtKB-SubCell"/>
</dbReference>
<dbReference type="GO" id="GO:0008137">
    <property type="term" value="F:NADH dehydrogenase (ubiquinone) activity"/>
    <property type="evidence" value="ECO:0007669"/>
    <property type="project" value="InterPro"/>
</dbReference>
<dbReference type="GO" id="GO:0048038">
    <property type="term" value="F:quinone binding"/>
    <property type="evidence" value="ECO:0007669"/>
    <property type="project" value="UniProtKB-KW"/>
</dbReference>
<dbReference type="GO" id="GO:0042773">
    <property type="term" value="P:ATP synthesis coupled electron transport"/>
    <property type="evidence" value="ECO:0007669"/>
    <property type="project" value="InterPro"/>
</dbReference>
<dbReference type="GO" id="GO:0015990">
    <property type="term" value="P:electron transport coupled proton transport"/>
    <property type="evidence" value="ECO:0007669"/>
    <property type="project" value="TreeGrafter"/>
</dbReference>
<dbReference type="Gene3D" id="1.20.5.2700">
    <property type="match status" value="1"/>
</dbReference>
<dbReference type="InterPro" id="IPR002128">
    <property type="entry name" value="NADH_UbQ_OxRdtase_chlpt_su5_C"/>
</dbReference>
<dbReference type="InterPro" id="IPR018393">
    <property type="entry name" value="NADHpl_OxRdtase_5_subgr"/>
</dbReference>
<dbReference type="InterPro" id="IPR001750">
    <property type="entry name" value="ND/Mrp_TM"/>
</dbReference>
<dbReference type="InterPro" id="IPR003945">
    <property type="entry name" value="NU5C-like"/>
</dbReference>
<dbReference type="InterPro" id="IPR001516">
    <property type="entry name" value="Proton_antipo_N"/>
</dbReference>
<dbReference type="NCBIfam" id="TIGR01974">
    <property type="entry name" value="NDH_I_L"/>
    <property type="match status" value="1"/>
</dbReference>
<dbReference type="NCBIfam" id="NF005141">
    <property type="entry name" value="PRK06590.1"/>
    <property type="match status" value="1"/>
</dbReference>
<dbReference type="PANTHER" id="PTHR42829">
    <property type="entry name" value="NADH-UBIQUINONE OXIDOREDUCTASE CHAIN 5"/>
    <property type="match status" value="1"/>
</dbReference>
<dbReference type="PANTHER" id="PTHR42829:SF2">
    <property type="entry name" value="NADH-UBIQUINONE OXIDOREDUCTASE CHAIN 5"/>
    <property type="match status" value="1"/>
</dbReference>
<dbReference type="Pfam" id="PF01010">
    <property type="entry name" value="Proton_antipo_C"/>
    <property type="match status" value="1"/>
</dbReference>
<dbReference type="Pfam" id="PF00361">
    <property type="entry name" value="Proton_antipo_M"/>
    <property type="match status" value="1"/>
</dbReference>
<dbReference type="Pfam" id="PF00662">
    <property type="entry name" value="Proton_antipo_N"/>
    <property type="match status" value="1"/>
</dbReference>
<dbReference type="PRINTS" id="PR01434">
    <property type="entry name" value="NADHDHGNASE5"/>
</dbReference>
<dbReference type="PRINTS" id="PR01435">
    <property type="entry name" value="NPOXDRDTASE5"/>
</dbReference>
<sequence length="746" mass="85318">MEHTYQYSWIIPFIPLPVPILLGVGLLLFPTATKNLRRIWTFLSIFLLSIVMIFSLYLSIQQIFISCIHQNVWSWTINNEFSFEFGYFIDPLTSIMSILITTVGILVLIYSDNYMSHDQGYLRFFAYMGFFNTSMLGLVTSSNLIQVYFFWELVGMCSYLLIGFWFTRPVAANACQKAFVTNRVGDFGLLLGILGLYWITGSFEFQDLFEIFNNLILNNRVNFFFFTLCGFLLFVGPIAKSAQFPLHVWLPDAMEGPTPISALIHAATMVAAGIFLVARLLPLFIVIPSIMYIISLIGIITVLLGATLALAQKDIKRGLAYSTMSQLGYMMLALGMGSYRSALFHLITHAYSKALLFLGSGSIIHSMEAIVGYSPDKSQNMILMGGLTKHVPITKTAFLIGTLSLCGIPPLACFWSKDEILNDSLLFSPIFAIIACSTAGLTAFYMFRIYLLTFEGHLNTYFLNYSGKKSRSFYSLSLWGKEEEKKLNKNFGLVPLLTMNNTKRSSFFCNKTYKISNNVRNKIFITVENFGLNTRTFYYPHESDNTILFPILILLLFTLFIGAIGIPFNQEGIDFDILSKLFTPSINLLHNNSQNFVDWYEFLRNATFSVSIAFFGIFIAYCLYKPFYSSLLNLTLLNSFQKWNSKRIRWEKLINFVYNWSYNRGYIDAFFKTYLIESIRGLAKQTNFVDKRIIDGITNGVGITSFFVGEVTKYIGGSRISSYLFFYLSYVLIFLLILFFFYFEKF</sequence>
<protein>
    <recommendedName>
        <fullName>NAD(P)H-quinone oxidoreductase subunit 5, chloroplastic</fullName>
        <ecNumber>7.1.1.-</ecNumber>
    </recommendedName>
    <alternativeName>
        <fullName>NAD(P)H dehydrogenase subunit 5</fullName>
    </alternativeName>
    <alternativeName>
        <fullName>NADH-plastoquinone oxidoreductase subunit 5</fullName>
    </alternativeName>
</protein>
<organism>
    <name type="scientific">Capsella bursa-pastoris</name>
    <name type="common">Shepherd's purse</name>
    <name type="synonym">Thlaspi bursa-pastoris</name>
    <dbReference type="NCBI Taxonomy" id="3719"/>
    <lineage>
        <taxon>Eukaryota</taxon>
        <taxon>Viridiplantae</taxon>
        <taxon>Streptophyta</taxon>
        <taxon>Embryophyta</taxon>
        <taxon>Tracheophyta</taxon>
        <taxon>Spermatophyta</taxon>
        <taxon>Magnoliopsida</taxon>
        <taxon>eudicotyledons</taxon>
        <taxon>Gunneridae</taxon>
        <taxon>Pentapetalae</taxon>
        <taxon>rosids</taxon>
        <taxon>malvids</taxon>
        <taxon>Brassicales</taxon>
        <taxon>Brassicaceae</taxon>
        <taxon>Camelineae</taxon>
        <taxon>Capsella</taxon>
    </lineage>
</organism>
<feature type="chain" id="PRO_0000360916" description="NAD(P)H-quinone oxidoreductase subunit 5, chloroplastic">
    <location>
        <begin position="1"/>
        <end position="746"/>
    </location>
</feature>
<feature type="transmembrane region" description="Helical" evidence="2">
    <location>
        <begin position="9"/>
        <end position="29"/>
    </location>
</feature>
<feature type="transmembrane region" description="Helical" evidence="2">
    <location>
        <begin position="39"/>
        <end position="59"/>
    </location>
</feature>
<feature type="transmembrane region" description="Helical" evidence="2">
    <location>
        <begin position="89"/>
        <end position="109"/>
    </location>
</feature>
<feature type="transmembrane region" description="Helical" evidence="2">
    <location>
        <begin position="125"/>
        <end position="145"/>
    </location>
</feature>
<feature type="transmembrane region" description="Helical" evidence="2">
    <location>
        <begin position="147"/>
        <end position="167"/>
    </location>
</feature>
<feature type="transmembrane region" description="Helical" evidence="2">
    <location>
        <begin position="185"/>
        <end position="205"/>
    </location>
</feature>
<feature type="transmembrane region" description="Helical" evidence="2">
    <location>
        <begin position="221"/>
        <end position="241"/>
    </location>
</feature>
<feature type="transmembrane region" description="Helical" evidence="2">
    <location>
        <begin position="258"/>
        <end position="278"/>
    </location>
</feature>
<feature type="transmembrane region" description="Helical" evidence="2">
    <location>
        <begin position="280"/>
        <end position="300"/>
    </location>
</feature>
<feature type="transmembrane region" description="Helical" evidence="2">
    <location>
        <begin position="327"/>
        <end position="347"/>
    </location>
</feature>
<feature type="transmembrane region" description="Helical" evidence="2">
    <location>
        <begin position="354"/>
        <end position="374"/>
    </location>
</feature>
<feature type="transmembrane region" description="Helical" evidence="2">
    <location>
        <begin position="396"/>
        <end position="416"/>
    </location>
</feature>
<feature type="transmembrane region" description="Helical" evidence="2">
    <location>
        <begin position="425"/>
        <end position="445"/>
    </location>
</feature>
<feature type="transmembrane region" description="Helical" evidence="2">
    <location>
        <begin position="547"/>
        <end position="567"/>
    </location>
</feature>
<feature type="transmembrane region" description="Helical" evidence="2">
    <location>
        <begin position="608"/>
        <end position="628"/>
    </location>
</feature>
<feature type="transmembrane region" description="Helical" evidence="2">
    <location>
        <begin position="723"/>
        <end position="743"/>
    </location>
</feature>
<evidence type="ECO:0000250" key="1"/>
<evidence type="ECO:0000255" key="2"/>
<evidence type="ECO:0000305" key="3"/>
<name>NU5C_CAPBU</name>
<gene>
    <name type="primary">ndhF</name>
</gene>
<proteinExistence type="inferred from homology"/>
<accession>A4QKP2</accession>
<keyword id="KW-0150">Chloroplast</keyword>
<keyword id="KW-0472">Membrane</keyword>
<keyword id="KW-0520">NAD</keyword>
<keyword id="KW-0521">NADP</keyword>
<keyword id="KW-0934">Plastid</keyword>
<keyword id="KW-0618">Plastoquinone</keyword>
<keyword id="KW-0874">Quinone</keyword>
<keyword id="KW-0793">Thylakoid</keyword>
<keyword id="KW-1278">Translocase</keyword>
<keyword id="KW-0812">Transmembrane</keyword>
<keyword id="KW-1133">Transmembrane helix</keyword>
<keyword id="KW-0813">Transport</keyword>
<reference key="1">
    <citation type="submission" date="2007-03" db="EMBL/GenBank/DDBJ databases">
        <title>Sequencing analysis of Capsella bursa-pastoris JO22 chloroplast DNA.</title>
        <authorList>
            <person name="Hosouchi T."/>
            <person name="Tsuruoka H."/>
            <person name="Kotani H."/>
        </authorList>
    </citation>
    <scope>NUCLEOTIDE SEQUENCE [LARGE SCALE GENOMIC DNA]</scope>
</reference>
<geneLocation type="chloroplast"/>
<comment type="function">
    <text evidence="1">NDH shuttles electrons from NAD(P)H:plastoquinone, via FMN and iron-sulfur (Fe-S) centers, to quinones in the photosynthetic chain and possibly in a chloroplast respiratory chain. The immediate electron acceptor for the enzyme in this species is believed to be plastoquinone. Couples the redox reaction to proton translocation, and thus conserves the redox energy in a proton gradient (By similarity).</text>
</comment>
<comment type="catalytic activity">
    <reaction>
        <text>a plastoquinone + NADH + (n+1) H(+)(in) = a plastoquinol + NAD(+) + n H(+)(out)</text>
        <dbReference type="Rhea" id="RHEA:42608"/>
        <dbReference type="Rhea" id="RHEA-COMP:9561"/>
        <dbReference type="Rhea" id="RHEA-COMP:9562"/>
        <dbReference type="ChEBI" id="CHEBI:15378"/>
        <dbReference type="ChEBI" id="CHEBI:17757"/>
        <dbReference type="ChEBI" id="CHEBI:57540"/>
        <dbReference type="ChEBI" id="CHEBI:57945"/>
        <dbReference type="ChEBI" id="CHEBI:62192"/>
    </reaction>
</comment>
<comment type="catalytic activity">
    <reaction>
        <text>a plastoquinone + NADPH + (n+1) H(+)(in) = a plastoquinol + NADP(+) + n H(+)(out)</text>
        <dbReference type="Rhea" id="RHEA:42612"/>
        <dbReference type="Rhea" id="RHEA-COMP:9561"/>
        <dbReference type="Rhea" id="RHEA-COMP:9562"/>
        <dbReference type="ChEBI" id="CHEBI:15378"/>
        <dbReference type="ChEBI" id="CHEBI:17757"/>
        <dbReference type="ChEBI" id="CHEBI:57783"/>
        <dbReference type="ChEBI" id="CHEBI:58349"/>
        <dbReference type="ChEBI" id="CHEBI:62192"/>
    </reaction>
</comment>
<comment type="subunit">
    <text evidence="1">NDH is composed of at least 16 different subunits, 5 of which are encoded in the nucleus.</text>
</comment>
<comment type="subcellular location">
    <subcellularLocation>
        <location evidence="1">Plastid</location>
        <location evidence="1">Chloroplast thylakoid membrane</location>
        <topology evidence="1">Multi-pass membrane protein</topology>
    </subcellularLocation>
</comment>
<comment type="similarity">
    <text evidence="3">Belongs to the complex I subunit 5 family.</text>
</comment>